<feature type="transit peptide" description="Chloroplast" evidence="1">
    <location>
        <begin position="1"/>
        <end position="51"/>
    </location>
</feature>
<feature type="chain" id="PRO_0000402916" description="Translation factor GUF1 homolog, chloroplastic">
    <location>
        <begin position="52"/>
        <end position="680"/>
    </location>
</feature>
<feature type="domain" description="tr-type G">
    <location>
        <begin position="75"/>
        <end position="256"/>
    </location>
</feature>
<feature type="region of interest" description="Disordered" evidence="2">
    <location>
        <begin position="1"/>
        <end position="68"/>
    </location>
</feature>
<feature type="compositionally biased region" description="Pro residues" evidence="2">
    <location>
        <begin position="28"/>
        <end position="37"/>
    </location>
</feature>
<feature type="compositionally biased region" description="Low complexity" evidence="2">
    <location>
        <begin position="38"/>
        <end position="60"/>
    </location>
</feature>
<feature type="binding site" evidence="1">
    <location>
        <begin position="84"/>
        <end position="91"/>
    </location>
    <ligand>
        <name>GTP</name>
        <dbReference type="ChEBI" id="CHEBI:37565"/>
    </ligand>
</feature>
<feature type="binding site" evidence="1">
    <location>
        <begin position="149"/>
        <end position="153"/>
    </location>
    <ligand>
        <name>GTP</name>
        <dbReference type="ChEBI" id="CHEBI:37565"/>
    </ligand>
</feature>
<feature type="binding site" evidence="1">
    <location>
        <begin position="203"/>
        <end position="206"/>
    </location>
    <ligand>
        <name>GTP</name>
        <dbReference type="ChEBI" id="CHEBI:37565"/>
    </ligand>
</feature>
<feature type="sequence conflict" description="In Ref. 1; BAD28023/BAD28168." evidence="3" ref="1">
    <original>Q</original>
    <variation>H</variation>
    <location>
        <position position="19"/>
    </location>
</feature>
<gene>
    <name type="ordered locus">Os02g0157700</name>
    <name type="ordered locus">LOC_Os02g06300</name>
    <name type="ORF">B1103G11.7</name>
    <name type="ORF">OsJ_05443</name>
    <name type="ORF">P0419H03.27</name>
</gene>
<evidence type="ECO:0000255" key="1">
    <source>
        <dbReference type="HAMAP-Rule" id="MF_03138"/>
    </source>
</evidence>
<evidence type="ECO:0000256" key="2">
    <source>
        <dbReference type="SAM" id="MobiDB-lite"/>
    </source>
</evidence>
<evidence type="ECO:0000305" key="3"/>
<organism>
    <name type="scientific">Oryza sativa subsp. japonica</name>
    <name type="common">Rice</name>
    <dbReference type="NCBI Taxonomy" id="39947"/>
    <lineage>
        <taxon>Eukaryota</taxon>
        <taxon>Viridiplantae</taxon>
        <taxon>Streptophyta</taxon>
        <taxon>Embryophyta</taxon>
        <taxon>Tracheophyta</taxon>
        <taxon>Spermatophyta</taxon>
        <taxon>Magnoliopsida</taxon>
        <taxon>Liliopsida</taxon>
        <taxon>Poales</taxon>
        <taxon>Poaceae</taxon>
        <taxon>BOP clade</taxon>
        <taxon>Oryzoideae</taxon>
        <taxon>Oryzeae</taxon>
        <taxon>Oryzinae</taxon>
        <taxon>Oryza</taxon>
        <taxon>Oryza sativa</taxon>
    </lineage>
</organism>
<dbReference type="EC" id="3.6.5.-"/>
<dbReference type="EMBL" id="AP004843">
    <property type="protein sequence ID" value="BAD28023.1"/>
    <property type="molecule type" value="Genomic_DNA"/>
</dbReference>
<dbReference type="EMBL" id="AP004871">
    <property type="protein sequence ID" value="BAD28168.1"/>
    <property type="molecule type" value="Genomic_DNA"/>
</dbReference>
<dbReference type="EMBL" id="AP014958">
    <property type="status" value="NOT_ANNOTATED_CDS"/>
    <property type="molecule type" value="Genomic_DNA"/>
</dbReference>
<dbReference type="EMBL" id="CM000139">
    <property type="protein sequence ID" value="EEE56339.1"/>
    <property type="molecule type" value="Genomic_DNA"/>
</dbReference>
<dbReference type="SMR" id="B9F2U5"/>
<dbReference type="FunCoup" id="B9F2U5">
    <property type="interactions" value="323"/>
</dbReference>
<dbReference type="STRING" id="39947.B9F2U5"/>
<dbReference type="PaxDb" id="39947-B9F2U5"/>
<dbReference type="InParanoid" id="B9F2U5"/>
<dbReference type="Proteomes" id="UP000000763">
    <property type="component" value="Chromosome 2"/>
</dbReference>
<dbReference type="Proteomes" id="UP000007752">
    <property type="component" value="Chromosome 2"/>
</dbReference>
<dbReference type="Proteomes" id="UP000059680">
    <property type="component" value="Chromosome 2"/>
</dbReference>
<dbReference type="GO" id="GO:0009507">
    <property type="term" value="C:chloroplast"/>
    <property type="evidence" value="ECO:0007669"/>
    <property type="project" value="UniProtKB-SubCell"/>
</dbReference>
<dbReference type="GO" id="GO:0005525">
    <property type="term" value="F:GTP binding"/>
    <property type="evidence" value="ECO:0007669"/>
    <property type="project" value="UniProtKB-UniRule"/>
</dbReference>
<dbReference type="GO" id="GO:0003924">
    <property type="term" value="F:GTPase activity"/>
    <property type="evidence" value="ECO:0007669"/>
    <property type="project" value="UniProtKB-UniRule"/>
</dbReference>
<dbReference type="GO" id="GO:0043022">
    <property type="term" value="F:ribosome binding"/>
    <property type="evidence" value="ECO:0000318"/>
    <property type="project" value="GO_Central"/>
</dbReference>
<dbReference type="GO" id="GO:0045727">
    <property type="term" value="P:positive regulation of translation"/>
    <property type="evidence" value="ECO:0000318"/>
    <property type="project" value="GO_Central"/>
</dbReference>
<dbReference type="GO" id="GO:0006412">
    <property type="term" value="P:translation"/>
    <property type="evidence" value="ECO:0007669"/>
    <property type="project" value="UniProtKB-KW"/>
</dbReference>
<dbReference type="CDD" id="cd03699">
    <property type="entry name" value="EF4_II"/>
    <property type="match status" value="1"/>
</dbReference>
<dbReference type="CDD" id="cd16260">
    <property type="entry name" value="EF4_III"/>
    <property type="match status" value="1"/>
</dbReference>
<dbReference type="CDD" id="cd01890">
    <property type="entry name" value="LepA"/>
    <property type="match status" value="1"/>
</dbReference>
<dbReference type="CDD" id="cd03709">
    <property type="entry name" value="lepA_C"/>
    <property type="match status" value="1"/>
</dbReference>
<dbReference type="FunFam" id="3.40.50.300:FF:000078">
    <property type="entry name" value="Elongation factor 4"/>
    <property type="match status" value="1"/>
</dbReference>
<dbReference type="FunFam" id="2.40.30.10:FF:000015">
    <property type="entry name" value="Translation factor GUF1, mitochondrial"/>
    <property type="match status" value="1"/>
</dbReference>
<dbReference type="FunFam" id="3.30.70.240:FF:000007">
    <property type="entry name" value="Translation factor GUF1, mitochondrial"/>
    <property type="match status" value="1"/>
</dbReference>
<dbReference type="FunFam" id="3.30.70.2570:FF:000001">
    <property type="entry name" value="Translation factor GUF1, mitochondrial"/>
    <property type="match status" value="1"/>
</dbReference>
<dbReference type="FunFam" id="3.30.70.870:FF:000004">
    <property type="entry name" value="Translation factor GUF1, mitochondrial"/>
    <property type="match status" value="1"/>
</dbReference>
<dbReference type="Gene3D" id="3.30.70.240">
    <property type="match status" value="1"/>
</dbReference>
<dbReference type="Gene3D" id="3.30.70.2570">
    <property type="entry name" value="Elongation factor 4, C-terminal domain"/>
    <property type="match status" value="1"/>
</dbReference>
<dbReference type="Gene3D" id="3.30.70.870">
    <property type="entry name" value="Elongation Factor G (Translational Gtpase), domain 3"/>
    <property type="match status" value="1"/>
</dbReference>
<dbReference type="Gene3D" id="3.40.50.300">
    <property type="entry name" value="P-loop containing nucleotide triphosphate hydrolases"/>
    <property type="match status" value="1"/>
</dbReference>
<dbReference type="Gene3D" id="2.40.30.10">
    <property type="entry name" value="Translation factors"/>
    <property type="match status" value="1"/>
</dbReference>
<dbReference type="HAMAP" id="MF_03138">
    <property type="entry name" value="GUFP"/>
    <property type="match status" value="1"/>
</dbReference>
<dbReference type="HAMAP" id="MF_00071">
    <property type="entry name" value="LepA"/>
    <property type="match status" value="1"/>
</dbReference>
<dbReference type="InterPro" id="IPR006297">
    <property type="entry name" value="EF-4"/>
</dbReference>
<dbReference type="InterPro" id="IPR035647">
    <property type="entry name" value="EFG_III/V"/>
</dbReference>
<dbReference type="InterPro" id="IPR000640">
    <property type="entry name" value="EFG_V-like"/>
</dbReference>
<dbReference type="InterPro" id="IPR004161">
    <property type="entry name" value="EFTu-like_2"/>
</dbReference>
<dbReference type="InterPro" id="IPR031157">
    <property type="entry name" value="G_TR_CS"/>
</dbReference>
<dbReference type="InterPro" id="IPR027518">
    <property type="entry name" value="GUFP"/>
</dbReference>
<dbReference type="InterPro" id="IPR038363">
    <property type="entry name" value="LepA_C_sf"/>
</dbReference>
<dbReference type="InterPro" id="IPR013842">
    <property type="entry name" value="LepA_CTD"/>
</dbReference>
<dbReference type="InterPro" id="IPR035654">
    <property type="entry name" value="LepA_IV"/>
</dbReference>
<dbReference type="InterPro" id="IPR027417">
    <property type="entry name" value="P-loop_NTPase"/>
</dbReference>
<dbReference type="InterPro" id="IPR005225">
    <property type="entry name" value="Small_GTP-bd"/>
</dbReference>
<dbReference type="InterPro" id="IPR000795">
    <property type="entry name" value="T_Tr_GTP-bd_dom"/>
</dbReference>
<dbReference type="InterPro" id="IPR009000">
    <property type="entry name" value="Transl_B-barrel_sf"/>
</dbReference>
<dbReference type="NCBIfam" id="TIGR01393">
    <property type="entry name" value="lepA"/>
    <property type="match status" value="1"/>
</dbReference>
<dbReference type="NCBIfam" id="TIGR00231">
    <property type="entry name" value="small_GTP"/>
    <property type="match status" value="1"/>
</dbReference>
<dbReference type="PANTHER" id="PTHR43512:SF4">
    <property type="entry name" value="TRANSLATION FACTOR GUF1 HOMOLOG, CHLOROPLASTIC"/>
    <property type="match status" value="1"/>
</dbReference>
<dbReference type="PANTHER" id="PTHR43512">
    <property type="entry name" value="TRANSLATION FACTOR GUF1-RELATED"/>
    <property type="match status" value="1"/>
</dbReference>
<dbReference type="Pfam" id="PF00679">
    <property type="entry name" value="EFG_C"/>
    <property type="match status" value="1"/>
</dbReference>
<dbReference type="Pfam" id="PF00009">
    <property type="entry name" value="GTP_EFTU"/>
    <property type="match status" value="1"/>
</dbReference>
<dbReference type="Pfam" id="PF03144">
    <property type="entry name" value="GTP_EFTU_D2"/>
    <property type="match status" value="1"/>
</dbReference>
<dbReference type="Pfam" id="PF06421">
    <property type="entry name" value="LepA_C"/>
    <property type="match status" value="1"/>
</dbReference>
<dbReference type="PRINTS" id="PR00315">
    <property type="entry name" value="ELONGATNFCT"/>
</dbReference>
<dbReference type="SMART" id="SM00838">
    <property type="entry name" value="EFG_C"/>
    <property type="match status" value="1"/>
</dbReference>
<dbReference type="SUPFAM" id="SSF54980">
    <property type="entry name" value="EF-G C-terminal domain-like"/>
    <property type="match status" value="2"/>
</dbReference>
<dbReference type="SUPFAM" id="SSF52540">
    <property type="entry name" value="P-loop containing nucleoside triphosphate hydrolases"/>
    <property type="match status" value="1"/>
</dbReference>
<dbReference type="SUPFAM" id="SSF50447">
    <property type="entry name" value="Translation proteins"/>
    <property type="match status" value="1"/>
</dbReference>
<dbReference type="PROSITE" id="PS00301">
    <property type="entry name" value="G_TR_1"/>
    <property type="match status" value="1"/>
</dbReference>
<dbReference type="PROSITE" id="PS51722">
    <property type="entry name" value="G_TR_2"/>
    <property type="match status" value="1"/>
</dbReference>
<reference key="1">
    <citation type="journal article" date="2005" name="Nature">
        <title>The map-based sequence of the rice genome.</title>
        <authorList>
            <consortium name="International rice genome sequencing project (IRGSP)"/>
        </authorList>
    </citation>
    <scope>NUCLEOTIDE SEQUENCE [LARGE SCALE GENOMIC DNA]</scope>
    <source>
        <strain>cv. Nipponbare</strain>
    </source>
</reference>
<reference key="2">
    <citation type="journal article" date="2013" name="Rice">
        <title>Improvement of the Oryza sativa Nipponbare reference genome using next generation sequence and optical map data.</title>
        <authorList>
            <person name="Kawahara Y."/>
            <person name="de la Bastide M."/>
            <person name="Hamilton J.P."/>
            <person name="Kanamori H."/>
            <person name="McCombie W.R."/>
            <person name="Ouyang S."/>
            <person name="Schwartz D.C."/>
            <person name="Tanaka T."/>
            <person name="Wu J."/>
            <person name="Zhou S."/>
            <person name="Childs K.L."/>
            <person name="Davidson R.M."/>
            <person name="Lin H."/>
            <person name="Quesada-Ocampo L."/>
            <person name="Vaillancourt B."/>
            <person name="Sakai H."/>
            <person name="Lee S.S."/>
            <person name="Kim J."/>
            <person name="Numa H."/>
            <person name="Itoh T."/>
            <person name="Buell C.R."/>
            <person name="Matsumoto T."/>
        </authorList>
    </citation>
    <scope>GENOME REANNOTATION</scope>
    <source>
        <strain>cv. Nipponbare</strain>
    </source>
</reference>
<reference key="3">
    <citation type="journal article" date="2005" name="PLoS Biol.">
        <title>The genomes of Oryza sativa: a history of duplications.</title>
        <authorList>
            <person name="Yu J."/>
            <person name="Wang J."/>
            <person name="Lin W."/>
            <person name="Li S."/>
            <person name="Li H."/>
            <person name="Zhou J."/>
            <person name="Ni P."/>
            <person name="Dong W."/>
            <person name="Hu S."/>
            <person name="Zeng C."/>
            <person name="Zhang J."/>
            <person name="Zhang Y."/>
            <person name="Li R."/>
            <person name="Xu Z."/>
            <person name="Li S."/>
            <person name="Li X."/>
            <person name="Zheng H."/>
            <person name="Cong L."/>
            <person name="Lin L."/>
            <person name="Yin J."/>
            <person name="Geng J."/>
            <person name="Li G."/>
            <person name="Shi J."/>
            <person name="Liu J."/>
            <person name="Lv H."/>
            <person name="Li J."/>
            <person name="Wang J."/>
            <person name="Deng Y."/>
            <person name="Ran L."/>
            <person name="Shi X."/>
            <person name="Wang X."/>
            <person name="Wu Q."/>
            <person name="Li C."/>
            <person name="Ren X."/>
            <person name="Wang J."/>
            <person name="Wang X."/>
            <person name="Li D."/>
            <person name="Liu D."/>
            <person name="Zhang X."/>
            <person name="Ji Z."/>
            <person name="Zhao W."/>
            <person name="Sun Y."/>
            <person name="Zhang Z."/>
            <person name="Bao J."/>
            <person name="Han Y."/>
            <person name="Dong L."/>
            <person name="Ji J."/>
            <person name="Chen P."/>
            <person name="Wu S."/>
            <person name="Liu J."/>
            <person name="Xiao Y."/>
            <person name="Bu D."/>
            <person name="Tan J."/>
            <person name="Yang L."/>
            <person name="Ye C."/>
            <person name="Zhang J."/>
            <person name="Xu J."/>
            <person name="Zhou Y."/>
            <person name="Yu Y."/>
            <person name="Zhang B."/>
            <person name="Zhuang S."/>
            <person name="Wei H."/>
            <person name="Liu B."/>
            <person name="Lei M."/>
            <person name="Yu H."/>
            <person name="Li Y."/>
            <person name="Xu H."/>
            <person name="Wei S."/>
            <person name="He X."/>
            <person name="Fang L."/>
            <person name="Zhang Z."/>
            <person name="Zhang Y."/>
            <person name="Huang X."/>
            <person name="Su Z."/>
            <person name="Tong W."/>
            <person name="Li J."/>
            <person name="Tong Z."/>
            <person name="Li S."/>
            <person name="Ye J."/>
            <person name="Wang L."/>
            <person name="Fang L."/>
            <person name="Lei T."/>
            <person name="Chen C.-S."/>
            <person name="Chen H.-C."/>
            <person name="Xu Z."/>
            <person name="Li H."/>
            <person name="Huang H."/>
            <person name="Zhang F."/>
            <person name="Xu H."/>
            <person name="Li N."/>
            <person name="Zhao C."/>
            <person name="Li S."/>
            <person name="Dong L."/>
            <person name="Huang Y."/>
            <person name="Li L."/>
            <person name="Xi Y."/>
            <person name="Qi Q."/>
            <person name="Li W."/>
            <person name="Zhang B."/>
            <person name="Hu W."/>
            <person name="Zhang Y."/>
            <person name="Tian X."/>
            <person name="Jiao Y."/>
            <person name="Liang X."/>
            <person name="Jin J."/>
            <person name="Gao L."/>
            <person name="Zheng W."/>
            <person name="Hao B."/>
            <person name="Liu S.-M."/>
            <person name="Wang W."/>
            <person name="Yuan L."/>
            <person name="Cao M."/>
            <person name="McDermott J."/>
            <person name="Samudrala R."/>
            <person name="Wang J."/>
            <person name="Wong G.K.-S."/>
            <person name="Yang H."/>
        </authorList>
    </citation>
    <scope>NUCLEOTIDE SEQUENCE [LARGE SCALE GENOMIC DNA]</scope>
    <source>
        <strain>cv. Nipponbare</strain>
    </source>
</reference>
<comment type="function">
    <text evidence="1">Promotes chloroplast protein synthesis. May act as a fidelity factor of the translation reaction, by catalyzing a one-codon backward translocation of tRNAs on improperly translocated ribosomes.</text>
</comment>
<comment type="catalytic activity">
    <reaction evidence="1">
        <text>GTP + H2O = GDP + phosphate + H(+)</text>
        <dbReference type="Rhea" id="RHEA:19669"/>
        <dbReference type="ChEBI" id="CHEBI:15377"/>
        <dbReference type="ChEBI" id="CHEBI:15378"/>
        <dbReference type="ChEBI" id="CHEBI:37565"/>
        <dbReference type="ChEBI" id="CHEBI:43474"/>
        <dbReference type="ChEBI" id="CHEBI:58189"/>
    </reaction>
</comment>
<comment type="subcellular location">
    <subcellularLocation>
        <location evidence="1">Plastid</location>
        <location evidence="1">Chloroplast</location>
    </subcellularLocation>
</comment>
<comment type="similarity">
    <text evidence="1">Belongs to the TRAFAC class translation factor GTPase superfamily. Classic translation factor GTPase family. LepA subfamily.</text>
</comment>
<accession>B9F2U5</accession>
<accession>Q6ET52</accession>
<proteinExistence type="inferred from homology"/>
<name>GUFP_ORYSJ</name>
<keyword id="KW-0150">Chloroplast</keyword>
<keyword id="KW-0342">GTP-binding</keyword>
<keyword id="KW-0378">Hydrolase</keyword>
<keyword id="KW-0547">Nucleotide-binding</keyword>
<keyword id="KW-0934">Plastid</keyword>
<keyword id="KW-0648">Protein biosynthesis</keyword>
<keyword id="KW-1185">Reference proteome</keyword>
<keyword id="KW-0809">Transit peptide</keyword>
<sequence>MATATASRLAVPAPRTSPQAPGRRRPAAPLPSAPPRPRALSAAPRGRVVCPAAPASSPASTTDAGQDRLQKVPVSNIRNFSIIAHIDHGKSTLADKLLELTGTVQKREMKQQFLDNMDLERERGITIKLQAARMRYIMNDEPYCLNLIDTPGHVDFSYEVSRSLAACEGALLVVDASQGVEAQTLANVYLALENDLEIIPVLNKIDLPGAEPDRVAQEIEEIIGMDCSNAIRCSAKEGIGITEILDAIVTKIPPPQNTAISPLRALIFDSYYDPYRGVIVYFRVVDGSIKKGDKICFMASGKEYVADEIGVLSPNQMQVSELYAGEVGYLSASIRSVADARVGDTITHSSKRAECALPGYSQATPMVFCGLFPIDADQFEELREALEKLQLNDAALKAVTRFSMQFEPESSSAMGFGFRCGFLGLLHMEIVQERLEREYNLNLIITAPSVVYHVNLADGETVECSNPSLLPEPGKRRSIEEPYVKIDMLTPKEYIGPIMELGQERRGEFKEMNFITENRASVVYELPLAEMVGDFFDQLKSRSKGYASMEYSLIGYRESNLVKLDIQINGDPVEALSTIVHRDKAYSVGRALTQKLKELIPRQMFRVPIQACIGAKVIASEALSAIRKDVLSKCYGGDISRKKKLLKKQAEGKKRMKAIGRVDVPQEAFMAVLKLEKEVL</sequence>
<protein>
    <recommendedName>
        <fullName evidence="1">Translation factor GUF1 homolog, chloroplastic</fullName>
        <ecNumber>3.6.5.-</ecNumber>
    </recommendedName>
    <alternativeName>
        <fullName evidence="1">Elongation factor 4 homolog</fullName>
        <shortName evidence="1">EF-4</shortName>
    </alternativeName>
    <alternativeName>
        <fullName evidence="1">GTPase GUF1 homolog</fullName>
    </alternativeName>
    <alternativeName>
        <fullName evidence="1">Ribosomal back-translocase</fullName>
    </alternativeName>
</protein>